<comment type="function">
    <text evidence="2">Neuropeptide PDF is the main transmitter regulating circadian locomotor rhythms.</text>
</comment>
<comment type="subcellular location">
    <subcellularLocation>
        <location evidence="7">Secreted</location>
    </subcellularLocation>
</comment>
<comment type="tissue specificity">
    <text evidence="4">Expressed in the brain (at protein level).</text>
</comment>
<comment type="mass spectrometry" mass="1964.04" method="Electrospray" evidence="4">
    <molecule>Pigment-dispersing factor</molecule>
</comment>
<comment type="similarity">
    <text evidence="6">Belongs to the arthropod PDH family.</text>
</comment>
<proteinExistence type="evidence at protein level"/>
<accession>E2AX75</accession>
<feature type="signal peptide" evidence="3">
    <location>
        <begin position="1"/>
        <end position="20"/>
    </location>
</feature>
<feature type="chain" id="PRO_0000434240" description="Pigment-dispersing hormone peptides" evidence="3">
    <location>
        <begin position="21"/>
        <end position="80"/>
    </location>
</feature>
<feature type="propeptide" id="PRO_0000434241" evidence="7">
    <location>
        <begin position="21"/>
        <end position="58"/>
    </location>
</feature>
<feature type="peptide" id="PRO_0000434242" description="Pigment-dispersing factor" evidence="4">
    <location>
        <begin position="61"/>
        <end position="78"/>
    </location>
</feature>
<feature type="modified residue" description="Alanine amide" evidence="4">
    <location>
        <position position="78"/>
    </location>
</feature>
<organism>
    <name type="scientific">Camponotus floridanus</name>
    <name type="common">Florida carpenter ant</name>
    <dbReference type="NCBI Taxonomy" id="104421"/>
    <lineage>
        <taxon>Eukaryota</taxon>
        <taxon>Metazoa</taxon>
        <taxon>Ecdysozoa</taxon>
        <taxon>Arthropoda</taxon>
        <taxon>Hexapoda</taxon>
        <taxon>Insecta</taxon>
        <taxon>Pterygota</taxon>
        <taxon>Neoptera</taxon>
        <taxon>Endopterygota</taxon>
        <taxon>Hymenoptera</taxon>
        <taxon>Apocrita</taxon>
        <taxon>Aculeata</taxon>
        <taxon>Formicoidea</taxon>
        <taxon>Formicidae</taxon>
        <taxon>Formicinae</taxon>
        <taxon>Camponotus</taxon>
    </lineage>
</organism>
<gene>
    <name evidence="8" type="ORF">EAG_01710</name>
</gene>
<sequence length="80" mass="8785">MANYITIAIIVGIVCGQALSVEDVDRNLLELNLPYGRGLDSELQLARLMLAAPRFCHPKRNSELINSLLGLPKNMHNAGK</sequence>
<dbReference type="EMBL" id="GL443520">
    <property type="protein sequence ID" value="EFN61958.1"/>
    <property type="molecule type" value="Genomic_DNA"/>
</dbReference>
<dbReference type="EnsemblMetazoa" id="XM_011267257.2">
    <property type="protein sequence ID" value="XP_011265559.1"/>
    <property type="gene ID" value="LOC105256952"/>
</dbReference>
<dbReference type="EnsemblMetazoa" id="XM_025409006.1">
    <property type="protein sequence ID" value="XP_025264791.1"/>
    <property type="gene ID" value="LOC105256952"/>
</dbReference>
<dbReference type="KEGG" id="cfo:105256952"/>
<dbReference type="CTD" id="64146"/>
<dbReference type="OMA" id="LCHPKRN"/>
<dbReference type="OrthoDB" id="8178425at2759"/>
<dbReference type="Proteomes" id="UP000000311">
    <property type="component" value="Unassembled WGS sequence"/>
</dbReference>
<dbReference type="GO" id="GO:0005576">
    <property type="term" value="C:extracellular region"/>
    <property type="evidence" value="ECO:0007669"/>
    <property type="project" value="UniProtKB-SubCell"/>
</dbReference>
<dbReference type="GO" id="GO:0005179">
    <property type="term" value="F:hormone activity"/>
    <property type="evidence" value="ECO:0007669"/>
    <property type="project" value="InterPro"/>
</dbReference>
<dbReference type="GO" id="GO:0007218">
    <property type="term" value="P:neuropeptide signaling pathway"/>
    <property type="evidence" value="ECO:0007669"/>
    <property type="project" value="UniProtKB-KW"/>
</dbReference>
<dbReference type="GO" id="GO:0009416">
    <property type="term" value="P:response to light stimulus"/>
    <property type="evidence" value="ECO:0007669"/>
    <property type="project" value="InterPro"/>
</dbReference>
<dbReference type="InterPro" id="IPR009396">
    <property type="entry name" value="Pigment_DH"/>
</dbReference>
<dbReference type="Pfam" id="PF06324">
    <property type="entry name" value="Pigment_DH"/>
    <property type="match status" value="1"/>
</dbReference>
<reference key="1">
    <citation type="journal article" date="2010" name="Science">
        <title>Genomic comparison of the ants Camponotus floridanus and Harpegnathos saltator.</title>
        <authorList>
            <person name="Bonasio R."/>
            <person name="Zhang G."/>
            <person name="Ye C."/>
            <person name="Mutti N.S."/>
            <person name="Fang X."/>
            <person name="Qin N."/>
            <person name="Donahue G."/>
            <person name="Yang P."/>
            <person name="Li Q."/>
            <person name="Li C."/>
            <person name="Zhang P."/>
            <person name="Huang Z."/>
            <person name="Berger S.L."/>
            <person name="Reinberg D."/>
            <person name="Wang J."/>
            <person name="Liebig J."/>
        </authorList>
    </citation>
    <scope>NUCLEOTIDE SEQUENCE [LARGE SCALE GENOMIC DNA]</scope>
</reference>
<reference evidence="6" key="2">
    <citation type="journal article" date="2015" name="J. Proteome Res.">
        <title>Neuropeptidomics of the carpenter ant Camponotus floridanus.</title>
        <authorList>
            <person name="Schmitt F."/>
            <person name="Vanselow J.T."/>
            <person name="Schlosser A."/>
            <person name="Kahnt J."/>
            <person name="Roessler W."/>
            <person name="Wegener C."/>
        </authorList>
    </citation>
    <scope>PROTEIN SEQUENCE OF 61-78</scope>
    <scope>TISSUE SPECIFICITY</scope>
    <scope>MASS SPECTROMETRY</scope>
    <scope>IDENTIFICATION BY MASS SPECTROMETRY</scope>
    <scope>AMIDATION AT ALA-78</scope>
</reference>
<protein>
    <recommendedName>
        <fullName evidence="1">Pigment-dispersing hormone peptides</fullName>
    </recommendedName>
    <component>
        <recommendedName>
            <fullName evidence="5">Pigment-dispersing factor</fullName>
            <shortName evidence="5">PDF</shortName>
        </recommendedName>
    </component>
</protein>
<name>PDH_CAMFO</name>
<evidence type="ECO:0000250" key="1">
    <source>
        <dbReference type="UniProtKB" id="D2IT41"/>
    </source>
</evidence>
<evidence type="ECO:0000250" key="2">
    <source>
        <dbReference type="UniProtKB" id="O96690"/>
    </source>
</evidence>
<evidence type="ECO:0000255" key="3"/>
<evidence type="ECO:0000269" key="4">
    <source>
    </source>
</evidence>
<evidence type="ECO:0000303" key="5">
    <source>
    </source>
</evidence>
<evidence type="ECO:0000305" key="6"/>
<evidence type="ECO:0000305" key="7">
    <source>
    </source>
</evidence>
<evidence type="ECO:0000312" key="8">
    <source>
        <dbReference type="EMBL" id="EFN61958.1"/>
    </source>
</evidence>
<keyword id="KW-0027">Amidation</keyword>
<keyword id="KW-0165">Cleavage on pair of basic residues</keyword>
<keyword id="KW-0903">Direct protein sequencing</keyword>
<keyword id="KW-0527">Neuropeptide</keyword>
<keyword id="KW-1185">Reference proteome</keyword>
<keyword id="KW-0964">Secreted</keyword>
<keyword id="KW-0732">Signal</keyword>